<accession>Q8PM04</accession>
<sequence length="354" mass="37255">MNDSAHIDYARYDHIRPLLWTGDALELLDQRKLPFEVAHVRCDSSDAVAEAIHSLAVRGAPAIGIAAGWGVVLAARDIAADDGSAALQKLEPALLRLNAARPTAVNLAWALMRMRRVLGAAGADWREVIAREAQAIADEDLAANRHMGALGAALIAPGSGVLTHCNTGSLATAGFGTALGVIRAGMAQQRIAKVFAGETRPWLQGARLTVWELHQDGIDATLIADSAASHLMKSGLVQWVIVGADRICANGDTANKIGTYQLAIAARHHGVKFMVVAPSSTVDMATASGDQIEIEQRDPGELFGVGGVRTVADGIHAWNPVFDVTPGDLIDAIVTERGVIAQPDLARMQAAFGS</sequence>
<proteinExistence type="inferred from homology"/>
<protein>
    <recommendedName>
        <fullName evidence="1">Methylthioribose-1-phosphate isomerase</fullName>
        <shortName evidence="1">M1Pi</shortName>
        <shortName evidence="1">MTR-1-P isomerase</shortName>
        <ecNumber evidence="1">5.3.1.23</ecNumber>
    </recommendedName>
    <alternativeName>
        <fullName evidence="1">S-methyl-5-thioribose-1-phosphate isomerase</fullName>
    </alternativeName>
</protein>
<feature type="chain" id="PRO_0000357267" description="Methylthioribose-1-phosphate isomerase">
    <location>
        <begin position="1"/>
        <end position="354"/>
    </location>
</feature>
<feature type="active site" description="Proton donor" evidence="1">
    <location>
        <position position="245"/>
    </location>
</feature>
<feature type="binding site" evidence="1">
    <location>
        <begin position="58"/>
        <end position="60"/>
    </location>
    <ligand>
        <name>substrate</name>
    </ligand>
</feature>
<feature type="binding site" evidence="1">
    <location>
        <position position="101"/>
    </location>
    <ligand>
        <name>substrate</name>
    </ligand>
</feature>
<feature type="binding site" evidence="1">
    <location>
        <position position="204"/>
    </location>
    <ligand>
        <name>substrate</name>
    </ligand>
</feature>
<feature type="binding site" evidence="1">
    <location>
        <begin position="255"/>
        <end position="256"/>
    </location>
    <ligand>
        <name>substrate</name>
    </ligand>
</feature>
<feature type="site" description="Transition state stabilizer" evidence="1">
    <location>
        <position position="165"/>
    </location>
</feature>
<organism>
    <name type="scientific">Xanthomonas axonopodis pv. citri (strain 306)</name>
    <dbReference type="NCBI Taxonomy" id="190486"/>
    <lineage>
        <taxon>Bacteria</taxon>
        <taxon>Pseudomonadati</taxon>
        <taxon>Pseudomonadota</taxon>
        <taxon>Gammaproteobacteria</taxon>
        <taxon>Lysobacterales</taxon>
        <taxon>Lysobacteraceae</taxon>
        <taxon>Xanthomonas</taxon>
    </lineage>
</organism>
<keyword id="KW-0028">Amino-acid biosynthesis</keyword>
<keyword id="KW-0413">Isomerase</keyword>
<keyword id="KW-0486">Methionine biosynthesis</keyword>
<dbReference type="EC" id="5.3.1.23" evidence="1"/>
<dbReference type="EMBL" id="AE008923">
    <property type="protein sequence ID" value="AAM36498.1"/>
    <property type="molecule type" value="Genomic_DNA"/>
</dbReference>
<dbReference type="RefSeq" id="WP_011051043.1">
    <property type="nucleotide sequence ID" value="NC_003919.1"/>
</dbReference>
<dbReference type="SMR" id="Q8PM04"/>
<dbReference type="GeneID" id="66910790"/>
<dbReference type="KEGG" id="xac:XAC1630"/>
<dbReference type="eggNOG" id="COG0182">
    <property type="taxonomic scope" value="Bacteria"/>
</dbReference>
<dbReference type="HOGENOM" id="CLU_016218_1_2_6"/>
<dbReference type="UniPathway" id="UPA00904">
    <property type="reaction ID" value="UER00874"/>
</dbReference>
<dbReference type="Proteomes" id="UP000000576">
    <property type="component" value="Chromosome"/>
</dbReference>
<dbReference type="GO" id="GO:0046523">
    <property type="term" value="F:S-methyl-5-thioribose-1-phosphate isomerase activity"/>
    <property type="evidence" value="ECO:0007669"/>
    <property type="project" value="UniProtKB-UniRule"/>
</dbReference>
<dbReference type="GO" id="GO:0019509">
    <property type="term" value="P:L-methionine salvage from methylthioadenosine"/>
    <property type="evidence" value="ECO:0007669"/>
    <property type="project" value="UniProtKB-UniRule"/>
</dbReference>
<dbReference type="FunFam" id="1.20.120.420:FF:000007">
    <property type="entry name" value="Methylthioribose-1-phosphate isomerase"/>
    <property type="match status" value="1"/>
</dbReference>
<dbReference type="FunFam" id="3.40.50.10470:FF:000006">
    <property type="entry name" value="Methylthioribose-1-phosphate isomerase"/>
    <property type="match status" value="1"/>
</dbReference>
<dbReference type="Gene3D" id="1.20.120.420">
    <property type="entry name" value="translation initiation factor eif-2b, domain 1"/>
    <property type="match status" value="1"/>
</dbReference>
<dbReference type="Gene3D" id="3.40.50.10470">
    <property type="entry name" value="Translation initiation factor eif-2b, domain 2"/>
    <property type="match status" value="1"/>
</dbReference>
<dbReference type="HAMAP" id="MF_01678">
    <property type="entry name" value="Salvage_MtnA"/>
    <property type="match status" value="1"/>
</dbReference>
<dbReference type="InterPro" id="IPR000649">
    <property type="entry name" value="IF-2B-related"/>
</dbReference>
<dbReference type="InterPro" id="IPR005251">
    <property type="entry name" value="IF-M1Pi"/>
</dbReference>
<dbReference type="InterPro" id="IPR042529">
    <property type="entry name" value="IF_2B-like_C"/>
</dbReference>
<dbReference type="InterPro" id="IPR011559">
    <property type="entry name" value="Initiation_fac_2B_a/b/d"/>
</dbReference>
<dbReference type="InterPro" id="IPR027363">
    <property type="entry name" value="M1Pi_N"/>
</dbReference>
<dbReference type="InterPro" id="IPR037171">
    <property type="entry name" value="NagB/RpiA_transferase-like"/>
</dbReference>
<dbReference type="NCBIfam" id="TIGR00524">
    <property type="entry name" value="eIF-2B_rel"/>
    <property type="match status" value="1"/>
</dbReference>
<dbReference type="NCBIfam" id="NF004326">
    <property type="entry name" value="PRK05720.1"/>
    <property type="match status" value="1"/>
</dbReference>
<dbReference type="NCBIfam" id="TIGR00512">
    <property type="entry name" value="salvage_mtnA"/>
    <property type="match status" value="1"/>
</dbReference>
<dbReference type="PANTHER" id="PTHR43475">
    <property type="entry name" value="METHYLTHIORIBOSE-1-PHOSPHATE ISOMERASE"/>
    <property type="match status" value="1"/>
</dbReference>
<dbReference type="PANTHER" id="PTHR43475:SF1">
    <property type="entry name" value="METHYLTHIORIBOSE-1-PHOSPHATE ISOMERASE"/>
    <property type="match status" value="1"/>
</dbReference>
<dbReference type="Pfam" id="PF01008">
    <property type="entry name" value="IF-2B"/>
    <property type="match status" value="1"/>
</dbReference>
<dbReference type="SUPFAM" id="SSF100950">
    <property type="entry name" value="NagB/RpiA/CoA transferase-like"/>
    <property type="match status" value="1"/>
</dbReference>
<gene>
    <name evidence="1" type="primary">mtnA</name>
    <name type="ordered locus">XAC1630</name>
</gene>
<name>MTNA_XANAC</name>
<comment type="function">
    <text evidence="1">Catalyzes the interconversion of methylthioribose-1-phosphate (MTR-1-P) into methylthioribulose-1-phosphate (MTRu-1-P).</text>
</comment>
<comment type="catalytic activity">
    <reaction evidence="1">
        <text>5-(methylsulfanyl)-alpha-D-ribose 1-phosphate = 5-(methylsulfanyl)-D-ribulose 1-phosphate</text>
        <dbReference type="Rhea" id="RHEA:19989"/>
        <dbReference type="ChEBI" id="CHEBI:58533"/>
        <dbReference type="ChEBI" id="CHEBI:58548"/>
        <dbReference type="EC" id="5.3.1.23"/>
    </reaction>
</comment>
<comment type="pathway">
    <text evidence="1">Amino-acid biosynthesis; L-methionine biosynthesis via salvage pathway; L-methionine from S-methyl-5-thio-alpha-D-ribose 1-phosphate: step 1/6.</text>
</comment>
<comment type="similarity">
    <text evidence="2">Belongs to the eIF-2B alpha/beta/delta subunits family. MtnA subfamily.</text>
</comment>
<reference key="1">
    <citation type="journal article" date="2002" name="Nature">
        <title>Comparison of the genomes of two Xanthomonas pathogens with differing host specificities.</title>
        <authorList>
            <person name="da Silva A.C.R."/>
            <person name="Ferro J.A."/>
            <person name="Reinach F.C."/>
            <person name="Farah C.S."/>
            <person name="Furlan L.R."/>
            <person name="Quaggio R.B."/>
            <person name="Monteiro-Vitorello C.B."/>
            <person name="Van Sluys M.A."/>
            <person name="Almeida N.F. Jr."/>
            <person name="Alves L.M.C."/>
            <person name="do Amaral A.M."/>
            <person name="Bertolini M.C."/>
            <person name="Camargo L.E.A."/>
            <person name="Camarotte G."/>
            <person name="Cannavan F."/>
            <person name="Cardozo J."/>
            <person name="Chambergo F."/>
            <person name="Ciapina L.P."/>
            <person name="Cicarelli R.M.B."/>
            <person name="Coutinho L.L."/>
            <person name="Cursino-Santos J.R."/>
            <person name="El-Dorry H."/>
            <person name="Faria J.B."/>
            <person name="Ferreira A.J.S."/>
            <person name="Ferreira R.C.C."/>
            <person name="Ferro M.I.T."/>
            <person name="Formighieri E.F."/>
            <person name="Franco M.C."/>
            <person name="Greggio C.C."/>
            <person name="Gruber A."/>
            <person name="Katsuyama A.M."/>
            <person name="Kishi L.T."/>
            <person name="Leite R.P."/>
            <person name="Lemos E.G.M."/>
            <person name="Lemos M.V.F."/>
            <person name="Locali E.C."/>
            <person name="Machado M.A."/>
            <person name="Madeira A.M.B.N."/>
            <person name="Martinez-Rossi N.M."/>
            <person name="Martins E.C."/>
            <person name="Meidanis J."/>
            <person name="Menck C.F.M."/>
            <person name="Miyaki C.Y."/>
            <person name="Moon D.H."/>
            <person name="Moreira L.M."/>
            <person name="Novo M.T.M."/>
            <person name="Okura V.K."/>
            <person name="Oliveira M.C."/>
            <person name="Oliveira V.R."/>
            <person name="Pereira H.A."/>
            <person name="Rossi A."/>
            <person name="Sena J.A.D."/>
            <person name="Silva C."/>
            <person name="de Souza R.F."/>
            <person name="Spinola L.A.F."/>
            <person name="Takita M.A."/>
            <person name="Tamura R.E."/>
            <person name="Teixeira E.C."/>
            <person name="Tezza R.I.D."/>
            <person name="Trindade dos Santos M."/>
            <person name="Truffi D."/>
            <person name="Tsai S.M."/>
            <person name="White F.F."/>
            <person name="Setubal J.C."/>
            <person name="Kitajima J.P."/>
        </authorList>
    </citation>
    <scope>NUCLEOTIDE SEQUENCE [LARGE SCALE GENOMIC DNA]</scope>
    <source>
        <strain>306</strain>
    </source>
</reference>
<evidence type="ECO:0000255" key="1">
    <source>
        <dbReference type="HAMAP-Rule" id="MF_01678"/>
    </source>
</evidence>
<evidence type="ECO:0000305" key="2"/>